<keyword id="KW-0217">Developmental protein</keyword>
<keyword id="KW-0221">Differentiation</keyword>
<keyword id="KW-0238">DNA-binding</keyword>
<keyword id="KW-0524">Neurogenesis</keyword>
<keyword id="KW-0539">Nucleus</keyword>
<keyword id="KW-1267">Proteomics identification</keyword>
<keyword id="KW-1185">Reference proteome</keyword>
<keyword id="KW-0677">Repeat</keyword>
<keyword id="KW-0804">Transcription</keyword>
<keyword id="KW-0805">Transcription regulation</keyword>
<gene>
    <name type="primary">SIM1</name>
    <name type="synonym">BHLHE14</name>
</gene>
<proteinExistence type="evidence at protein level"/>
<evidence type="ECO:0000250" key="1"/>
<evidence type="ECO:0000250" key="2">
    <source>
        <dbReference type="UniProtKB" id="Q61045"/>
    </source>
</evidence>
<evidence type="ECO:0000255" key="3">
    <source>
        <dbReference type="PROSITE-ProRule" id="PRU00140"/>
    </source>
</evidence>
<evidence type="ECO:0000255" key="4">
    <source>
        <dbReference type="PROSITE-ProRule" id="PRU00632"/>
    </source>
</evidence>
<evidence type="ECO:0000255" key="5">
    <source>
        <dbReference type="PROSITE-ProRule" id="PRU00981"/>
    </source>
</evidence>
<evidence type="ECO:0000256" key="6">
    <source>
        <dbReference type="SAM" id="MobiDB-lite"/>
    </source>
</evidence>
<evidence type="ECO:0000305" key="7"/>
<name>SIM1_HUMAN</name>
<feature type="chain" id="PRO_0000127439" description="Single-minded homolog 1">
    <location>
        <begin position="1"/>
        <end position="766"/>
    </location>
</feature>
<feature type="domain" description="bHLH" evidence="5">
    <location>
        <begin position="1"/>
        <end position="53"/>
    </location>
</feature>
<feature type="domain" description="PAS 1" evidence="3">
    <location>
        <begin position="77"/>
        <end position="147"/>
    </location>
</feature>
<feature type="domain" description="PAS 2" evidence="3">
    <location>
        <begin position="218"/>
        <end position="288"/>
    </location>
</feature>
<feature type="domain" description="PAC">
    <location>
        <begin position="292"/>
        <end position="335"/>
    </location>
</feature>
<feature type="domain" description="Single-minded C-terminal" evidence="4">
    <location>
        <begin position="336"/>
        <end position="766"/>
    </location>
</feature>
<feature type="region of interest" description="Disordered" evidence="6">
    <location>
        <begin position="353"/>
        <end position="431"/>
    </location>
</feature>
<feature type="region of interest" description="Disordered" evidence="6">
    <location>
        <begin position="528"/>
        <end position="563"/>
    </location>
</feature>
<feature type="short sequence motif" description="Nuclear localization signal" evidence="1">
    <location>
        <begin position="368"/>
        <end position="387"/>
    </location>
</feature>
<feature type="compositionally biased region" description="Polar residues" evidence="6">
    <location>
        <begin position="353"/>
        <end position="365"/>
    </location>
</feature>
<feature type="compositionally biased region" description="Low complexity" evidence="6">
    <location>
        <begin position="373"/>
        <end position="385"/>
    </location>
</feature>
<feature type="compositionally biased region" description="Basic and acidic residues" evidence="6">
    <location>
        <begin position="394"/>
        <end position="404"/>
    </location>
</feature>
<feature type="sequence variant" id="VAR_049549" description="In dbSNP:rs438766.">
    <original>L</original>
    <variation>F</variation>
    <location>
        <position position="175"/>
    </location>
</feature>
<feature type="sequence variant" id="VAR_034496" description="In dbSNP:rs3734354.">
    <original>P</original>
    <variation>T</variation>
    <location>
        <position position="352"/>
    </location>
</feature>
<feature type="sequence variant" id="VAR_034497" description="In dbSNP:rs3734355.">
    <original>A</original>
    <variation>V</variation>
    <location>
        <position position="371"/>
    </location>
</feature>
<feature type="sequence conflict" description="In Ref. 1; AAB62395." evidence="7" ref="1">
    <original>P</original>
    <variation>A</variation>
    <location>
        <position position="30"/>
    </location>
</feature>
<feature type="sequence conflict" description="In Ref. 1; AAB62395." evidence="7" ref="1">
    <original>L</original>
    <variation>V</variation>
    <location>
        <position position="37"/>
    </location>
</feature>
<sequence>MKEKSKNAARTRREKENSEFYELAKLLPLPSAITSQLDKASIIRLTTSYLKMRVVFPEGLGEAWGHSSRTSPLDNVGRELGSHLLQTLDGFIFVVAPDGKIMYISETASVHLGLSQVELTGNSIYEYIHPADHDEMTAVLTAHQPYHSHFVQEYEIERSFFLRMKCVLAKRNAGLTCGGYKVIHCSGYLKIRQYSLDMSPFDGCYQNVGLVAVGHSLPPSAVTEIKLHSNMFMFRASLDMKLIFLDSRVAELTGYEPQDLIEKTLYHHVHGCDTFHLRCAHHLLLVKGQVTTKYYRFLAKHGGWVWVQSYATIVHNSRSSRPHCIVSVNYVLTDTEYKGLQLSLDQISASKPAFSYTSSSTPTMTDNRKGAKSRLSSSKSKSRTSPYPQYSGFHTERSESDHDSQWGGSPLTDTASPQLLDPADRPGSQHDASCAYRQFSDRSSLCYGFALDHSRLVEERHFHTQACEGGRCEAGRYFLGTPQAGREPWWGSRAALPLTKASPESREAYENSMPHIASVHRIHGRGHWDEDSVVSSPDPGSASESGDRYRTEQYQSSPHEPSKIETLIRATQQMIKEEENRLQLRKAPSDQLASINGAGKKHSLCFANYQQPPPTGEVCHGSALANTSPCDHIQQREGKMLSPHENDYDNSPTALSRISSPNSDRISKSSLILAKDYLHSDISPHQTAGDHPTVSPNCFGSHRQYFDKHAYTLTGYALEHLYDSETIRNYSLGCNGSHFDVTSHLRMQPDPAQGHKGTSVIITNGS</sequence>
<organism>
    <name type="scientific">Homo sapiens</name>
    <name type="common">Human</name>
    <dbReference type="NCBI Taxonomy" id="9606"/>
    <lineage>
        <taxon>Eukaryota</taxon>
        <taxon>Metazoa</taxon>
        <taxon>Chordata</taxon>
        <taxon>Craniata</taxon>
        <taxon>Vertebrata</taxon>
        <taxon>Euteleostomi</taxon>
        <taxon>Mammalia</taxon>
        <taxon>Eutheria</taxon>
        <taxon>Euarchontoglires</taxon>
        <taxon>Primates</taxon>
        <taxon>Haplorrhini</taxon>
        <taxon>Catarrhini</taxon>
        <taxon>Hominidae</taxon>
        <taxon>Homo</taxon>
    </lineage>
</organism>
<reference key="1">
    <citation type="journal article" date="1997" name="Genome Res.">
        <title>Cloning of two human homologs of the Drosophila single-minded gene SIM1 on chromosome 6q and SIM2 on 21q within the Down syndrome chromosomal region.</title>
        <authorList>
            <person name="Chrast R."/>
            <person name="Scott H.S."/>
            <person name="Chen H."/>
            <person name="Kudoh J."/>
            <person name="Rossier C."/>
            <person name="Minoshima S."/>
            <person name="Wang Y."/>
            <person name="Shimizu N."/>
            <person name="Antonarakis S.E."/>
        </authorList>
    </citation>
    <scope>NUCLEOTIDE SEQUENCE [MRNA]</scope>
</reference>
<reference key="2">
    <citation type="journal article" date="2003" name="Nature">
        <title>The DNA sequence and analysis of human chromosome 6.</title>
        <authorList>
            <person name="Mungall A.J."/>
            <person name="Palmer S.A."/>
            <person name="Sims S.K."/>
            <person name="Edwards C.A."/>
            <person name="Ashurst J.L."/>
            <person name="Wilming L."/>
            <person name="Jones M.C."/>
            <person name="Horton R."/>
            <person name="Hunt S.E."/>
            <person name="Scott C.E."/>
            <person name="Gilbert J.G.R."/>
            <person name="Clamp M.E."/>
            <person name="Bethel G."/>
            <person name="Milne S."/>
            <person name="Ainscough R."/>
            <person name="Almeida J.P."/>
            <person name="Ambrose K.D."/>
            <person name="Andrews T.D."/>
            <person name="Ashwell R.I.S."/>
            <person name="Babbage A.K."/>
            <person name="Bagguley C.L."/>
            <person name="Bailey J."/>
            <person name="Banerjee R."/>
            <person name="Barker D.J."/>
            <person name="Barlow K.F."/>
            <person name="Bates K."/>
            <person name="Beare D.M."/>
            <person name="Beasley H."/>
            <person name="Beasley O."/>
            <person name="Bird C.P."/>
            <person name="Blakey S.E."/>
            <person name="Bray-Allen S."/>
            <person name="Brook J."/>
            <person name="Brown A.J."/>
            <person name="Brown J.Y."/>
            <person name="Burford D.C."/>
            <person name="Burrill W."/>
            <person name="Burton J."/>
            <person name="Carder C."/>
            <person name="Carter N.P."/>
            <person name="Chapman J.C."/>
            <person name="Clark S.Y."/>
            <person name="Clark G."/>
            <person name="Clee C.M."/>
            <person name="Clegg S."/>
            <person name="Cobley V."/>
            <person name="Collier R.E."/>
            <person name="Collins J.E."/>
            <person name="Colman L.K."/>
            <person name="Corby N.R."/>
            <person name="Coville G.J."/>
            <person name="Culley K.M."/>
            <person name="Dhami P."/>
            <person name="Davies J."/>
            <person name="Dunn M."/>
            <person name="Earthrowl M.E."/>
            <person name="Ellington A.E."/>
            <person name="Evans K.A."/>
            <person name="Faulkner L."/>
            <person name="Francis M.D."/>
            <person name="Frankish A."/>
            <person name="Frankland J."/>
            <person name="French L."/>
            <person name="Garner P."/>
            <person name="Garnett J."/>
            <person name="Ghori M.J."/>
            <person name="Gilby L.M."/>
            <person name="Gillson C.J."/>
            <person name="Glithero R.J."/>
            <person name="Grafham D.V."/>
            <person name="Grant M."/>
            <person name="Gribble S."/>
            <person name="Griffiths C."/>
            <person name="Griffiths M.N.D."/>
            <person name="Hall R."/>
            <person name="Halls K.S."/>
            <person name="Hammond S."/>
            <person name="Harley J.L."/>
            <person name="Hart E.A."/>
            <person name="Heath P.D."/>
            <person name="Heathcott R."/>
            <person name="Holmes S.J."/>
            <person name="Howden P.J."/>
            <person name="Howe K.L."/>
            <person name="Howell G.R."/>
            <person name="Huckle E."/>
            <person name="Humphray S.J."/>
            <person name="Humphries M.D."/>
            <person name="Hunt A.R."/>
            <person name="Johnson C.M."/>
            <person name="Joy A.A."/>
            <person name="Kay M."/>
            <person name="Keenan S.J."/>
            <person name="Kimberley A.M."/>
            <person name="King A."/>
            <person name="Laird G.K."/>
            <person name="Langford C."/>
            <person name="Lawlor S."/>
            <person name="Leongamornlert D.A."/>
            <person name="Leversha M."/>
            <person name="Lloyd C.R."/>
            <person name="Lloyd D.M."/>
            <person name="Loveland J.E."/>
            <person name="Lovell J."/>
            <person name="Martin S."/>
            <person name="Mashreghi-Mohammadi M."/>
            <person name="Maslen G.L."/>
            <person name="Matthews L."/>
            <person name="McCann O.T."/>
            <person name="McLaren S.J."/>
            <person name="McLay K."/>
            <person name="McMurray A."/>
            <person name="Moore M.J.F."/>
            <person name="Mullikin J.C."/>
            <person name="Niblett D."/>
            <person name="Nickerson T."/>
            <person name="Novik K.L."/>
            <person name="Oliver K."/>
            <person name="Overton-Larty E.K."/>
            <person name="Parker A."/>
            <person name="Patel R."/>
            <person name="Pearce A.V."/>
            <person name="Peck A.I."/>
            <person name="Phillimore B.J.C.T."/>
            <person name="Phillips S."/>
            <person name="Plumb R.W."/>
            <person name="Porter K.M."/>
            <person name="Ramsey Y."/>
            <person name="Ranby S.A."/>
            <person name="Rice C.M."/>
            <person name="Ross M.T."/>
            <person name="Searle S.M."/>
            <person name="Sehra H.K."/>
            <person name="Sheridan E."/>
            <person name="Skuce C.D."/>
            <person name="Smith S."/>
            <person name="Smith M."/>
            <person name="Spraggon L."/>
            <person name="Squares S.L."/>
            <person name="Steward C.A."/>
            <person name="Sycamore N."/>
            <person name="Tamlyn-Hall G."/>
            <person name="Tester J."/>
            <person name="Theaker A.J."/>
            <person name="Thomas D.W."/>
            <person name="Thorpe A."/>
            <person name="Tracey A."/>
            <person name="Tromans A."/>
            <person name="Tubby B."/>
            <person name="Wall M."/>
            <person name="Wallis J.M."/>
            <person name="West A.P."/>
            <person name="White S.S."/>
            <person name="Whitehead S.L."/>
            <person name="Whittaker H."/>
            <person name="Wild A."/>
            <person name="Willey D.J."/>
            <person name="Wilmer T.E."/>
            <person name="Wood J.M."/>
            <person name="Wray P.W."/>
            <person name="Wyatt J.C."/>
            <person name="Young L."/>
            <person name="Younger R.M."/>
            <person name="Bentley D.R."/>
            <person name="Coulson A."/>
            <person name="Durbin R.M."/>
            <person name="Hubbard T."/>
            <person name="Sulston J.E."/>
            <person name="Dunham I."/>
            <person name="Rogers J."/>
            <person name="Beck S."/>
        </authorList>
    </citation>
    <scope>NUCLEOTIDE SEQUENCE [LARGE SCALE GENOMIC DNA]</scope>
</reference>
<reference key="3">
    <citation type="journal article" date="2004" name="Biochem. Biophys. Res. Commun.">
        <title>A novel nuclear localization signal in the human single-minded proteins SIM1 and SIM2.</title>
        <authorList>
            <person name="Yamaki A."/>
            <person name="Kudoh J."/>
            <person name="Shimizu N."/>
            <person name="Shimizu Y."/>
        </authorList>
    </citation>
    <scope>SUBCELLULAR LOCATION</scope>
    <scope>NUCLEAR LOCALIZATION SIGNAL</scope>
</reference>
<comment type="function">
    <text>Transcriptional factor that may have pleiotropic effects during embryogenesis and in the adult.</text>
</comment>
<comment type="subunit">
    <text evidence="2">Efficient DNA binding requires dimerization with another bHLH protein. Heterodimer; forms a heterodimer with ARNT, ARNT2 (By similarity).</text>
</comment>
<comment type="interaction">
    <interactant intactId="EBI-12808088">
        <id>P81133</id>
    </interactant>
    <interactant intactId="EBI-765971">
        <id>Q9HBZ2</id>
        <label>ARNT2</label>
    </interactant>
    <organismsDiffer>false</organismsDiffer>
    <experiments>3</experiments>
</comment>
<comment type="subcellular location">
    <subcellularLocation>
        <location evidence="4 5">Nucleus</location>
    </subcellularLocation>
</comment>
<protein>
    <recommendedName>
        <fullName>Single-minded homolog 1</fullName>
    </recommendedName>
    <alternativeName>
        <fullName>Class E basic helix-loop-helix protein 14</fullName>
        <shortName>bHLHe14</shortName>
    </alternativeName>
</protein>
<accession>P81133</accession>
<accession>Q5TDP7</accession>
<dbReference type="EMBL" id="U70212">
    <property type="protein sequence ID" value="AAB62395.1"/>
    <property type="molecule type" value="mRNA"/>
</dbReference>
<dbReference type="EMBL" id="AL121948">
    <property type="status" value="NOT_ANNOTATED_CDS"/>
    <property type="molecule type" value="Genomic_DNA"/>
</dbReference>
<dbReference type="EMBL" id="Z86062">
    <property type="status" value="NOT_ANNOTATED_CDS"/>
    <property type="molecule type" value="Genomic_DNA"/>
</dbReference>
<dbReference type="CCDS" id="CCDS5045.1"/>
<dbReference type="RefSeq" id="NP_001361698.1">
    <property type="nucleotide sequence ID" value="NM_001374769.1"/>
</dbReference>
<dbReference type="RefSeq" id="NP_005059.2">
    <property type="nucleotide sequence ID" value="NM_005068.2"/>
</dbReference>
<dbReference type="RefSeq" id="XP_005267157.1">
    <property type="nucleotide sequence ID" value="XM_005267100.2"/>
</dbReference>
<dbReference type="RefSeq" id="XP_016866686.1">
    <property type="nucleotide sequence ID" value="XM_017011197.1"/>
</dbReference>
<dbReference type="SMR" id="P81133"/>
<dbReference type="BioGRID" id="112383">
    <property type="interactions" value="7"/>
</dbReference>
<dbReference type="FunCoup" id="P81133">
    <property type="interactions" value="302"/>
</dbReference>
<dbReference type="IntAct" id="P81133">
    <property type="interactions" value="1"/>
</dbReference>
<dbReference type="STRING" id="9606.ENSP00000358210"/>
<dbReference type="GlyGen" id="P81133">
    <property type="glycosylation" value="1 site, 1 O-linked glycan (1 site)"/>
</dbReference>
<dbReference type="iPTMnet" id="P81133"/>
<dbReference type="PhosphoSitePlus" id="P81133"/>
<dbReference type="BioMuta" id="SIM1"/>
<dbReference type="DMDM" id="109940166"/>
<dbReference type="jPOST" id="P81133"/>
<dbReference type="MassIVE" id="P81133"/>
<dbReference type="PaxDb" id="9606-ENSP00000358210"/>
<dbReference type="PeptideAtlas" id="P81133"/>
<dbReference type="ProteomicsDB" id="57691"/>
<dbReference type="Antibodypedia" id="899">
    <property type="antibodies" value="152 antibodies from 24 providers"/>
</dbReference>
<dbReference type="DNASU" id="6492"/>
<dbReference type="Ensembl" id="ENST00000262901.4">
    <property type="protein sequence ID" value="ENSP00000262901.4"/>
    <property type="gene ID" value="ENSG00000112246.10"/>
</dbReference>
<dbReference type="Ensembl" id="ENST00000369208.8">
    <property type="protein sequence ID" value="ENSP00000358210.4"/>
    <property type="gene ID" value="ENSG00000112246.10"/>
</dbReference>
<dbReference type="GeneID" id="6492"/>
<dbReference type="KEGG" id="hsa:6492"/>
<dbReference type="MANE-Select" id="ENST00000369208.8">
    <property type="protein sequence ID" value="ENSP00000358210.4"/>
    <property type="RefSeq nucleotide sequence ID" value="NM_005068.3"/>
    <property type="RefSeq protein sequence ID" value="NP_005059.2"/>
</dbReference>
<dbReference type="UCSC" id="uc063qgu.1">
    <property type="organism name" value="human"/>
</dbReference>
<dbReference type="AGR" id="HGNC:10882"/>
<dbReference type="CTD" id="6492"/>
<dbReference type="DisGeNET" id="6492"/>
<dbReference type="GeneCards" id="SIM1"/>
<dbReference type="HGNC" id="HGNC:10882">
    <property type="gene designation" value="SIM1"/>
</dbReference>
<dbReference type="HPA" id="ENSG00000112246">
    <property type="expression patterns" value="Tissue enhanced (epididymis, kidney, skeletal muscle)"/>
</dbReference>
<dbReference type="MalaCards" id="SIM1"/>
<dbReference type="MIM" id="603128">
    <property type="type" value="gene"/>
</dbReference>
<dbReference type="neXtProt" id="NX_P81133"/>
<dbReference type="OpenTargets" id="ENSG00000112246"/>
<dbReference type="Orphanet" id="171829">
    <property type="disease" value="6q16 microdeletion syndrome"/>
</dbReference>
<dbReference type="Orphanet" id="369873">
    <property type="disease" value="Obesity due to SIM1 deficiency"/>
</dbReference>
<dbReference type="Orphanet" id="398079">
    <property type="disease" value="SIM1-related Prader-Willi-like syndrome"/>
</dbReference>
<dbReference type="PharmGKB" id="PA35782"/>
<dbReference type="VEuPathDB" id="HostDB:ENSG00000112246"/>
<dbReference type="eggNOG" id="KOG3559">
    <property type="taxonomic scope" value="Eukaryota"/>
</dbReference>
<dbReference type="GeneTree" id="ENSGT00940000156143"/>
<dbReference type="HOGENOM" id="CLU_010044_4_0_1"/>
<dbReference type="InParanoid" id="P81133"/>
<dbReference type="OMA" id="HQTVGDH"/>
<dbReference type="OrthoDB" id="6021714at2759"/>
<dbReference type="PAN-GO" id="P81133">
    <property type="GO annotations" value="3 GO annotations based on evolutionary models"/>
</dbReference>
<dbReference type="PhylomeDB" id="P81133"/>
<dbReference type="TreeFam" id="TF317772"/>
<dbReference type="PathwayCommons" id="P81133"/>
<dbReference type="SignaLink" id="P81133"/>
<dbReference type="SIGNOR" id="P81133"/>
<dbReference type="BioGRID-ORCS" id="6492">
    <property type="hits" value="9 hits in 1172 CRISPR screens"/>
</dbReference>
<dbReference type="CD-CODE" id="0AEBFC12">
    <property type="entry name" value="Synthetic Condensate 000361"/>
</dbReference>
<dbReference type="CD-CODE" id="44FCF654">
    <property type="entry name" value="Synthetic Condensate 000363"/>
</dbReference>
<dbReference type="ChiTaRS" id="SIM1">
    <property type="organism name" value="human"/>
</dbReference>
<dbReference type="GeneWiki" id="SIM1"/>
<dbReference type="GenomeRNAi" id="6492"/>
<dbReference type="Pharos" id="P81133">
    <property type="development level" value="Tbio"/>
</dbReference>
<dbReference type="PRO" id="PR:P81133"/>
<dbReference type="Proteomes" id="UP000005640">
    <property type="component" value="Chromosome 6"/>
</dbReference>
<dbReference type="RNAct" id="P81133">
    <property type="molecule type" value="protein"/>
</dbReference>
<dbReference type="Bgee" id="ENSG00000112246">
    <property type="expression patterns" value="Expressed in renal medulla and 53 other cell types or tissues"/>
</dbReference>
<dbReference type="GO" id="GO:0000785">
    <property type="term" value="C:chromatin"/>
    <property type="evidence" value="ECO:0000247"/>
    <property type="project" value="NTNU_SB"/>
</dbReference>
<dbReference type="GO" id="GO:0005634">
    <property type="term" value="C:nucleus"/>
    <property type="evidence" value="ECO:0007669"/>
    <property type="project" value="UniProtKB-SubCell"/>
</dbReference>
<dbReference type="GO" id="GO:0003677">
    <property type="term" value="F:DNA binding"/>
    <property type="evidence" value="ECO:0000304"/>
    <property type="project" value="ProtInc"/>
</dbReference>
<dbReference type="GO" id="GO:0003700">
    <property type="term" value="F:DNA-binding transcription factor activity"/>
    <property type="evidence" value="ECO:0000304"/>
    <property type="project" value="ProtInc"/>
</dbReference>
<dbReference type="GO" id="GO:0000981">
    <property type="term" value="F:DNA-binding transcription factor activity, RNA polymerase II-specific"/>
    <property type="evidence" value="ECO:0000247"/>
    <property type="project" value="NTNU_SB"/>
</dbReference>
<dbReference type="GO" id="GO:0046982">
    <property type="term" value="F:protein heterodimerization activity"/>
    <property type="evidence" value="ECO:0000250"/>
    <property type="project" value="UniProtKB"/>
</dbReference>
<dbReference type="GO" id="GO:0000977">
    <property type="term" value="F:RNA polymerase II transcription regulatory region sequence-specific DNA binding"/>
    <property type="evidence" value="ECO:0000318"/>
    <property type="project" value="GO_Central"/>
</dbReference>
<dbReference type="GO" id="GO:0030154">
    <property type="term" value="P:cell differentiation"/>
    <property type="evidence" value="ECO:0007669"/>
    <property type="project" value="UniProtKB-KW"/>
</dbReference>
<dbReference type="GO" id="GO:0007399">
    <property type="term" value="P:nervous system development"/>
    <property type="evidence" value="ECO:0000304"/>
    <property type="project" value="ProtInc"/>
</dbReference>
<dbReference type="GO" id="GO:0006357">
    <property type="term" value="P:regulation of transcription by RNA polymerase II"/>
    <property type="evidence" value="ECO:0000318"/>
    <property type="project" value="GO_Central"/>
</dbReference>
<dbReference type="GO" id="GO:0001657">
    <property type="term" value="P:ureteric bud development"/>
    <property type="evidence" value="ECO:0007669"/>
    <property type="project" value="Ensembl"/>
</dbReference>
<dbReference type="CDD" id="cd19738">
    <property type="entry name" value="bHLH-PAS_SIM1"/>
    <property type="match status" value="1"/>
</dbReference>
<dbReference type="CDD" id="cd00130">
    <property type="entry name" value="PAS"/>
    <property type="match status" value="2"/>
</dbReference>
<dbReference type="FunFam" id="3.30.450.20:FF:000017">
    <property type="entry name" value="SIM bHLH transcription factor 2"/>
    <property type="match status" value="1"/>
</dbReference>
<dbReference type="FunFam" id="3.30.450.20:FF:000047">
    <property type="entry name" value="SIM bHLH transcription factor 2"/>
    <property type="match status" value="1"/>
</dbReference>
<dbReference type="FunFam" id="4.10.280.10:FF:000007">
    <property type="entry name" value="single-minded homolog 1 isoform X1"/>
    <property type="match status" value="1"/>
</dbReference>
<dbReference type="Gene3D" id="4.10.280.10">
    <property type="entry name" value="Helix-loop-helix DNA-binding domain"/>
    <property type="match status" value="1"/>
</dbReference>
<dbReference type="Gene3D" id="3.30.450.20">
    <property type="entry name" value="PAS domain"/>
    <property type="match status" value="2"/>
</dbReference>
<dbReference type="InterPro" id="IPR011598">
    <property type="entry name" value="bHLH_dom"/>
</dbReference>
<dbReference type="InterPro" id="IPR036638">
    <property type="entry name" value="HLH_DNA-bd_sf"/>
</dbReference>
<dbReference type="InterPro" id="IPR001610">
    <property type="entry name" value="PAC"/>
</dbReference>
<dbReference type="InterPro" id="IPR000014">
    <property type="entry name" value="PAS"/>
</dbReference>
<dbReference type="InterPro" id="IPR035965">
    <property type="entry name" value="PAS-like_dom_sf"/>
</dbReference>
<dbReference type="InterPro" id="IPR013767">
    <property type="entry name" value="PAS_fold"/>
</dbReference>
<dbReference type="InterPro" id="IPR013655">
    <property type="entry name" value="PAS_fold_3"/>
</dbReference>
<dbReference type="InterPro" id="IPR010578">
    <property type="entry name" value="SIM_C"/>
</dbReference>
<dbReference type="PANTHER" id="PTHR23043">
    <property type="entry name" value="HYPOXIA-INDUCIBLE FACTOR 1 ALPHA"/>
    <property type="match status" value="1"/>
</dbReference>
<dbReference type="PANTHER" id="PTHR23043:SF22">
    <property type="entry name" value="SINGLE-MINDED HOMOLOG 1"/>
    <property type="match status" value="1"/>
</dbReference>
<dbReference type="Pfam" id="PF23171">
    <property type="entry name" value="bHLH_HIF1A"/>
    <property type="match status" value="1"/>
</dbReference>
<dbReference type="Pfam" id="PF00989">
    <property type="entry name" value="PAS"/>
    <property type="match status" value="1"/>
</dbReference>
<dbReference type="Pfam" id="PF08447">
    <property type="entry name" value="PAS_3"/>
    <property type="match status" value="1"/>
</dbReference>
<dbReference type="Pfam" id="PF06621">
    <property type="entry name" value="SIM_C"/>
    <property type="match status" value="1"/>
</dbReference>
<dbReference type="SMART" id="SM00353">
    <property type="entry name" value="HLH"/>
    <property type="match status" value="1"/>
</dbReference>
<dbReference type="SMART" id="SM00086">
    <property type="entry name" value="PAC"/>
    <property type="match status" value="1"/>
</dbReference>
<dbReference type="SMART" id="SM00091">
    <property type="entry name" value="PAS"/>
    <property type="match status" value="2"/>
</dbReference>
<dbReference type="SUPFAM" id="SSF47459">
    <property type="entry name" value="HLH, helix-loop-helix DNA-binding domain"/>
    <property type="match status" value="1"/>
</dbReference>
<dbReference type="SUPFAM" id="SSF55785">
    <property type="entry name" value="PYP-like sensor domain (PAS domain)"/>
    <property type="match status" value="2"/>
</dbReference>
<dbReference type="PROSITE" id="PS50888">
    <property type="entry name" value="BHLH"/>
    <property type="match status" value="1"/>
</dbReference>
<dbReference type="PROSITE" id="PS50112">
    <property type="entry name" value="PAS"/>
    <property type="match status" value="2"/>
</dbReference>
<dbReference type="PROSITE" id="PS51302">
    <property type="entry name" value="SIM_C"/>
    <property type="match status" value="1"/>
</dbReference>